<name>FLP16_CAEEL</name>
<protein>
    <recommendedName>
        <fullName>FMRFamide-like neuropeptides 16</fullName>
    </recommendedName>
    <component>
        <recommendedName>
            <fullName>AQTFVRF-amide 1</fullName>
        </recommendedName>
    </component>
    <component>
        <recommendedName>
            <fullName>AQTFVRF-amide 2</fullName>
        </recommendedName>
    </component>
    <component>
        <recommendedName>
            <fullName>GQTFVRF-amide</fullName>
        </recommendedName>
    </component>
</protein>
<proteinExistence type="evidence at protein level"/>
<comment type="function">
    <text evidence="3">FMRFamides and FMRFamide-like peptides are neuropeptides. AQTFVRF-amide inhibits the activity of dissected pharyngeal myogenic muscle system.</text>
</comment>
<comment type="subcellular location">
    <subcellularLocation>
        <location evidence="4">Secreted</location>
    </subcellularLocation>
</comment>
<comment type="tissue specificity">
    <text evidence="4">Each flp gene is expressed in a distinct set of neurons.</text>
</comment>
<comment type="similarity">
    <text evidence="1">Belongs to the FARP (FMRFamide related peptide) family.</text>
</comment>
<sequence length="92" mass="10270">MNFSGFEFSSIVAFFLLILQLSTAAVLPADYAYGVADEMSALPDSGSLFAEQRPSKRAQTFVRFGKRAQTFVRFGKRGQTFVRFGRSAPFEQ</sequence>
<accession>Q7YX32</accession>
<feature type="signal peptide" evidence="1">
    <location>
        <begin position="1"/>
        <end position="24"/>
    </location>
</feature>
<feature type="propeptide" id="PRO_0000312075" evidence="1">
    <location>
        <begin position="25"/>
        <end position="55"/>
    </location>
</feature>
<feature type="peptide" id="PRO_0000312076" description="AQTFVRF-amide 1" evidence="2">
    <location>
        <begin position="58"/>
        <end position="64"/>
    </location>
</feature>
<feature type="peptide" id="PRO_0000312077" description="AQTFVRF-amide 2" evidence="2">
    <location>
        <begin position="68"/>
        <end position="74"/>
    </location>
</feature>
<feature type="peptide" id="PRO_0000312078" description="GQTFVRF-amide" evidence="2">
    <location>
        <begin position="78"/>
        <end position="84"/>
    </location>
</feature>
<feature type="propeptide" id="PRO_0000312079" evidence="1">
    <location>
        <begin position="87"/>
        <end position="92"/>
    </location>
</feature>
<feature type="modified residue" description="Phenylalanine amide" evidence="2">
    <location>
        <position position="64"/>
    </location>
</feature>
<feature type="modified residue" description="Phenylalanine amide" evidence="2">
    <location>
        <position position="74"/>
    </location>
</feature>
<feature type="modified residue" description="Phenylalanine amide" evidence="2">
    <location>
        <position position="84"/>
    </location>
</feature>
<organism>
    <name type="scientific">Caenorhabditis elegans</name>
    <dbReference type="NCBI Taxonomy" id="6239"/>
    <lineage>
        <taxon>Eukaryota</taxon>
        <taxon>Metazoa</taxon>
        <taxon>Ecdysozoa</taxon>
        <taxon>Nematoda</taxon>
        <taxon>Chromadorea</taxon>
        <taxon>Rhabditida</taxon>
        <taxon>Rhabditina</taxon>
        <taxon>Rhabditomorpha</taxon>
        <taxon>Rhabditoidea</taxon>
        <taxon>Rhabditidae</taxon>
        <taxon>Peloderinae</taxon>
        <taxon>Caenorhabditis</taxon>
    </lineage>
</organism>
<reference evidence="5" key="1">
    <citation type="journal article" date="1998" name="Science">
        <title>Genome sequence of the nematode C. elegans: a platform for investigating biology.</title>
        <authorList>
            <consortium name="The C. elegans sequencing consortium"/>
        </authorList>
    </citation>
    <scope>NUCLEOTIDE SEQUENCE [LARGE SCALE GENOMIC DNA]</scope>
    <source>
        <strain evidence="5">Bristol N2</strain>
    </source>
</reference>
<reference evidence="4" key="2">
    <citation type="journal article" date="2005" name="Biochem. Biophys. Res. Commun.">
        <title>Discovering neuropeptides in Caenorhabditis elegans by two dimensional liquid chromatography and mass spectrometry.</title>
        <authorList>
            <person name="Husson S.J."/>
            <person name="Clynen E."/>
            <person name="Baggerman G."/>
            <person name="De Loof A."/>
            <person name="Schoofs L."/>
        </authorList>
    </citation>
    <scope>PROTEIN SEQUENCE OF 58-64; 68-74 AND 78-84</scope>
    <scope>AMIDATION AT PHE-64; PHE-74 AND PHE-84</scope>
    <source>
        <strain evidence="2">Bristol N2</strain>
    </source>
</reference>
<reference evidence="4" key="3">
    <citation type="journal article" date="2005" name="J. Neurobiol.">
        <title>Role of a FMRFamide-like family of neuropeptides in the pharyngeal nervous system of Caenorhabditis elegans.</title>
        <authorList>
            <person name="Papaioannou S."/>
            <person name="Marsden D."/>
            <person name="Franks C.J."/>
            <person name="Walker R.J."/>
            <person name="Holden-Dye L."/>
        </authorList>
    </citation>
    <scope>FUNCTION</scope>
</reference>
<evidence type="ECO:0000255" key="1"/>
<evidence type="ECO:0000269" key="2">
    <source>
    </source>
</evidence>
<evidence type="ECO:0000269" key="3">
    <source>
    </source>
</evidence>
<evidence type="ECO:0000305" key="4"/>
<evidence type="ECO:0000312" key="5">
    <source>
        <dbReference type="EMBL" id="CAE17795.1"/>
    </source>
</evidence>
<keyword id="KW-0027">Amidation</keyword>
<keyword id="KW-0165">Cleavage on pair of basic residues</keyword>
<keyword id="KW-0903">Direct protein sequencing</keyword>
<keyword id="KW-0527">Neuropeptide</keyword>
<keyword id="KW-1185">Reference proteome</keyword>
<keyword id="KW-0677">Repeat</keyword>
<keyword id="KW-0964">Secreted</keyword>
<keyword id="KW-0732">Signal</keyword>
<gene>
    <name evidence="5" type="primary">flp-16</name>
    <name type="ORF">F15D4.8</name>
</gene>
<dbReference type="EMBL" id="Z80344">
    <property type="protein sequence ID" value="CAE17795.1"/>
    <property type="molecule type" value="Genomic_DNA"/>
</dbReference>
<dbReference type="RefSeq" id="NP_001022091.1">
    <property type="nucleotide sequence ID" value="NM_001026920.4"/>
</dbReference>
<dbReference type="RefSeq" id="NP_001379402.1">
    <property type="nucleotide sequence ID" value="NM_001393218.1"/>
</dbReference>
<dbReference type="SMR" id="Q7YX32"/>
<dbReference type="BioGRID" id="531957">
    <property type="interactions" value="3"/>
</dbReference>
<dbReference type="FunCoup" id="Q7YX32">
    <property type="interactions" value="1337"/>
</dbReference>
<dbReference type="STRING" id="6239.F15D4.8.1"/>
<dbReference type="PaxDb" id="6239-F15D4.8"/>
<dbReference type="EnsemblMetazoa" id="F15D4.8.1">
    <property type="protein sequence ID" value="F15D4.8.1"/>
    <property type="gene ID" value="WBGene00001459"/>
</dbReference>
<dbReference type="GeneID" id="174967"/>
<dbReference type="UCSC" id="F15D4.8">
    <property type="organism name" value="c. elegans"/>
</dbReference>
<dbReference type="AGR" id="WB:WBGene00001459"/>
<dbReference type="WormBase" id="F15D4.8">
    <property type="protein sequence ID" value="CE34815"/>
    <property type="gene ID" value="WBGene00001459"/>
    <property type="gene designation" value="flp-16"/>
</dbReference>
<dbReference type="eggNOG" id="ENOG502TI12">
    <property type="taxonomic scope" value="Eukaryota"/>
</dbReference>
<dbReference type="HOGENOM" id="CLU_2456864_0_0_1"/>
<dbReference type="InParanoid" id="Q7YX32"/>
<dbReference type="OMA" id="VDYASQY"/>
<dbReference type="OrthoDB" id="5813613at2759"/>
<dbReference type="PRO" id="PR:Q7YX32"/>
<dbReference type="Proteomes" id="UP000001940">
    <property type="component" value="Chromosome II"/>
</dbReference>
<dbReference type="Bgee" id="WBGene00001459">
    <property type="expression patterns" value="Expressed in larva and 3 other cell types or tissues"/>
</dbReference>
<dbReference type="GO" id="GO:0005576">
    <property type="term" value="C:extracellular region"/>
    <property type="evidence" value="ECO:0000304"/>
    <property type="project" value="UniProtKB"/>
</dbReference>
<dbReference type="GO" id="GO:0071244">
    <property type="term" value="P:cellular response to carbon dioxide"/>
    <property type="evidence" value="ECO:0000315"/>
    <property type="project" value="UniProtKB"/>
</dbReference>
<dbReference type="GO" id="GO:1903745">
    <property type="term" value="P:negative regulation of nematode pharyngeal pumping"/>
    <property type="evidence" value="ECO:0000315"/>
    <property type="project" value="UniProtKB"/>
</dbReference>
<dbReference type="GO" id="GO:0045988">
    <property type="term" value="P:negative regulation of striated muscle contraction"/>
    <property type="evidence" value="ECO:0000314"/>
    <property type="project" value="UniProtKB"/>
</dbReference>
<dbReference type="GO" id="GO:0007218">
    <property type="term" value="P:neuropeptide signaling pathway"/>
    <property type="evidence" value="ECO:0000304"/>
    <property type="project" value="UniProtKB"/>
</dbReference>